<feature type="chain" id="PRO_0000217736" description="Microsomal glutathione S-transferase 1">
    <location>
        <begin position="1"/>
        <end position="155"/>
    </location>
</feature>
<feature type="topological domain" description="Lumenal" evidence="1">
    <location>
        <begin position="3"/>
        <end position="9"/>
    </location>
</feature>
<feature type="transmembrane region" description="Helical" evidence="3">
    <location>
        <begin position="10"/>
        <end position="33"/>
    </location>
</feature>
<feature type="topological domain" description="Cytoplasmic" evidence="1">
    <location>
        <begin position="34"/>
        <end position="62"/>
    </location>
</feature>
<feature type="transmembrane region" description="Helical" evidence="3">
    <location>
        <begin position="63"/>
        <end position="96"/>
    </location>
</feature>
<feature type="topological domain" description="Lumenal" evidence="1">
    <location>
        <begin position="97"/>
        <end position="99"/>
    </location>
</feature>
<feature type="transmembrane region" description="Helical" evidence="3">
    <location>
        <begin position="100"/>
        <end position="123"/>
    </location>
</feature>
<feature type="topological domain" description="Cytoplasmic" evidence="1">
    <location>
        <begin position="124"/>
        <end position="128"/>
    </location>
</feature>
<feature type="transmembrane region" description="Helical" evidence="3">
    <location>
        <begin position="129"/>
        <end position="148"/>
    </location>
</feature>
<feature type="topological domain" description="Lumenal" evidence="1">
    <location>
        <begin position="149"/>
        <end position="155"/>
    </location>
</feature>
<feature type="binding site" evidence="1">
    <location>
        <position position="38"/>
    </location>
    <ligand>
        <name>glutathione</name>
        <dbReference type="ChEBI" id="CHEBI:57925"/>
    </ligand>
</feature>
<feature type="binding site" evidence="1">
    <location>
        <position position="73"/>
    </location>
    <ligand>
        <name>glutathione</name>
        <dbReference type="ChEBI" id="CHEBI:57925"/>
    </ligand>
</feature>
<feature type="binding site" evidence="1">
    <location>
        <position position="74"/>
    </location>
    <ligand>
        <name>glutathione</name>
        <dbReference type="ChEBI" id="CHEBI:57925"/>
    </ligand>
</feature>
<feature type="binding site" evidence="1">
    <location>
        <position position="76"/>
    </location>
    <ligand>
        <name>glutathione</name>
        <dbReference type="ChEBI" id="CHEBI:57925"/>
    </ligand>
</feature>
<feature type="binding site" evidence="1">
    <location>
        <position position="81"/>
    </location>
    <ligand>
        <name>glutathione</name>
        <dbReference type="ChEBI" id="CHEBI:57925"/>
    </ligand>
</feature>
<feature type="binding site" evidence="1">
    <location>
        <position position="121"/>
    </location>
    <ligand>
        <name>glutathione</name>
        <dbReference type="ChEBI" id="CHEBI:57925"/>
    </ligand>
</feature>
<feature type="modified residue" description="N6-acetyllysine" evidence="2">
    <location>
        <position position="42"/>
    </location>
</feature>
<feature type="modified residue" description="N6-acetyllysine" evidence="2">
    <location>
        <position position="55"/>
    </location>
</feature>
<feature type="modified residue" description="N6-acetyllysine" evidence="2">
    <location>
        <position position="60"/>
    </location>
</feature>
<feature type="splice variant" id="VSP_046160" description="In isoform 2." evidence="5">
    <original>AHLNDLENIIPFLGIGLLYSLSGPDPSTAILHFRLFVGARIYHTIAYLTPLPQPNRALSFFVGYGVTLSMAYRLLKSKLYL</original>
    <variation>IKQTLSIYLASSI</variation>
    <location>
        <begin position="75"/>
        <end position="155"/>
    </location>
</feature>
<reference key="1">
    <citation type="journal article" date="1988" name="J. Biol. Chem.">
        <title>Gene expression of rat and human microsomal glutathione S-transferases.</title>
        <authorList>
            <person name="Dejong J.L."/>
            <person name="Morgenstern R."/>
            <person name="Joernvall H."/>
            <person name="Depierre J.W."/>
            <person name="Tu C.-P.D."/>
        </authorList>
    </citation>
    <scope>NUCLEOTIDE SEQUENCE [MRNA] (ISOFORM 1)</scope>
    <scope>TISSUE SPECIFICITY</scope>
    <source>
        <tissue>Liver</tissue>
    </source>
</reference>
<reference key="2">
    <citation type="journal article" date="1996" name="Genomics">
        <title>Structural organization of the human microsomal glutathione S-transferase gene (GST12).</title>
        <authorList>
            <person name="Kelner M.J."/>
            <person name="Stokely M.N."/>
            <person name="Stovall N.E."/>
            <person name="Montoya M.A."/>
        </authorList>
    </citation>
    <scope>NUCLEOTIDE SEQUENCE [GENOMIC DNA]</scope>
    <source>
        <tissue>Foreskin</tissue>
    </source>
</reference>
<reference key="3">
    <citation type="journal article" date="1999" name="Biochim. Biophys. Acta">
        <title>Microsomal GST-I: genomic organization, expression, and alternative splicing of the human gene.</title>
        <authorList>
            <person name="Lee S.H."/>
            <person name="DeJong J."/>
        </authorList>
    </citation>
    <scope>NUCLEOTIDE SEQUENCE [GENOMIC DNA]</scope>
</reference>
<reference key="4">
    <citation type="submission" date="2003-05" db="EMBL/GenBank/DDBJ databases">
        <title>Cloning of human full-length CDSs in BD Creator(TM) system donor vector.</title>
        <authorList>
            <person name="Kalnine N."/>
            <person name="Chen X."/>
            <person name="Rolfs A."/>
            <person name="Halleck A."/>
            <person name="Hines L."/>
            <person name="Eisenstein S."/>
            <person name="Koundinya M."/>
            <person name="Raphael J."/>
            <person name="Moreira D."/>
            <person name="Kelley T."/>
            <person name="LaBaer J."/>
            <person name="Lin Y."/>
            <person name="Phelan M."/>
            <person name="Farmer A."/>
        </authorList>
    </citation>
    <scope>NUCLEOTIDE SEQUENCE [LARGE SCALE MRNA] (ISOFORM 1)</scope>
</reference>
<reference key="5">
    <citation type="submission" date="2003-08" db="EMBL/GenBank/DDBJ databases">
        <authorList>
            <consortium name="NIEHS SNPs program"/>
        </authorList>
    </citation>
    <scope>NUCLEOTIDE SEQUENCE [GENOMIC DNA]</scope>
</reference>
<reference key="6">
    <citation type="journal article" date="2004" name="Nat. Genet.">
        <title>Complete sequencing and characterization of 21,243 full-length human cDNAs.</title>
        <authorList>
            <person name="Ota T."/>
            <person name="Suzuki Y."/>
            <person name="Nishikawa T."/>
            <person name="Otsuki T."/>
            <person name="Sugiyama T."/>
            <person name="Irie R."/>
            <person name="Wakamatsu A."/>
            <person name="Hayashi K."/>
            <person name="Sato H."/>
            <person name="Nagai K."/>
            <person name="Kimura K."/>
            <person name="Makita H."/>
            <person name="Sekine M."/>
            <person name="Obayashi M."/>
            <person name="Nishi T."/>
            <person name="Shibahara T."/>
            <person name="Tanaka T."/>
            <person name="Ishii S."/>
            <person name="Yamamoto J."/>
            <person name="Saito K."/>
            <person name="Kawai Y."/>
            <person name="Isono Y."/>
            <person name="Nakamura Y."/>
            <person name="Nagahari K."/>
            <person name="Murakami K."/>
            <person name="Yasuda T."/>
            <person name="Iwayanagi T."/>
            <person name="Wagatsuma M."/>
            <person name="Shiratori A."/>
            <person name="Sudo H."/>
            <person name="Hosoiri T."/>
            <person name="Kaku Y."/>
            <person name="Kodaira H."/>
            <person name="Kondo H."/>
            <person name="Sugawara M."/>
            <person name="Takahashi M."/>
            <person name="Kanda K."/>
            <person name="Yokoi T."/>
            <person name="Furuya T."/>
            <person name="Kikkawa E."/>
            <person name="Omura Y."/>
            <person name="Abe K."/>
            <person name="Kamihara K."/>
            <person name="Katsuta N."/>
            <person name="Sato K."/>
            <person name="Tanikawa M."/>
            <person name="Yamazaki M."/>
            <person name="Ninomiya K."/>
            <person name="Ishibashi T."/>
            <person name="Yamashita H."/>
            <person name="Murakawa K."/>
            <person name="Fujimori K."/>
            <person name="Tanai H."/>
            <person name="Kimata M."/>
            <person name="Watanabe M."/>
            <person name="Hiraoka S."/>
            <person name="Chiba Y."/>
            <person name="Ishida S."/>
            <person name="Ono Y."/>
            <person name="Takiguchi S."/>
            <person name="Watanabe S."/>
            <person name="Yosida M."/>
            <person name="Hotuta T."/>
            <person name="Kusano J."/>
            <person name="Kanehori K."/>
            <person name="Takahashi-Fujii A."/>
            <person name="Hara H."/>
            <person name="Tanase T.-O."/>
            <person name="Nomura Y."/>
            <person name="Togiya S."/>
            <person name="Komai F."/>
            <person name="Hara R."/>
            <person name="Takeuchi K."/>
            <person name="Arita M."/>
            <person name="Imose N."/>
            <person name="Musashino K."/>
            <person name="Yuuki H."/>
            <person name="Oshima A."/>
            <person name="Sasaki N."/>
            <person name="Aotsuka S."/>
            <person name="Yoshikawa Y."/>
            <person name="Matsunawa H."/>
            <person name="Ichihara T."/>
            <person name="Shiohata N."/>
            <person name="Sano S."/>
            <person name="Moriya S."/>
            <person name="Momiyama H."/>
            <person name="Satoh N."/>
            <person name="Takami S."/>
            <person name="Terashima Y."/>
            <person name="Suzuki O."/>
            <person name="Nakagawa S."/>
            <person name="Senoh A."/>
            <person name="Mizoguchi H."/>
            <person name="Goto Y."/>
            <person name="Shimizu F."/>
            <person name="Wakebe H."/>
            <person name="Hishigaki H."/>
            <person name="Watanabe T."/>
            <person name="Sugiyama A."/>
            <person name="Takemoto M."/>
            <person name="Kawakami B."/>
            <person name="Yamazaki M."/>
            <person name="Watanabe K."/>
            <person name="Kumagai A."/>
            <person name="Itakura S."/>
            <person name="Fukuzumi Y."/>
            <person name="Fujimori Y."/>
            <person name="Komiyama M."/>
            <person name="Tashiro H."/>
            <person name="Tanigami A."/>
            <person name="Fujiwara T."/>
            <person name="Ono T."/>
            <person name="Yamada K."/>
            <person name="Fujii Y."/>
            <person name="Ozaki K."/>
            <person name="Hirao M."/>
            <person name="Ohmori Y."/>
            <person name="Kawabata A."/>
            <person name="Hikiji T."/>
            <person name="Kobatake N."/>
            <person name="Inagaki H."/>
            <person name="Ikema Y."/>
            <person name="Okamoto S."/>
            <person name="Okitani R."/>
            <person name="Kawakami T."/>
            <person name="Noguchi S."/>
            <person name="Itoh T."/>
            <person name="Shigeta K."/>
            <person name="Senba T."/>
            <person name="Matsumura K."/>
            <person name="Nakajima Y."/>
            <person name="Mizuno T."/>
            <person name="Morinaga M."/>
            <person name="Sasaki M."/>
            <person name="Togashi T."/>
            <person name="Oyama M."/>
            <person name="Hata H."/>
            <person name="Watanabe M."/>
            <person name="Komatsu T."/>
            <person name="Mizushima-Sugano J."/>
            <person name="Satoh T."/>
            <person name="Shirai Y."/>
            <person name="Takahashi Y."/>
            <person name="Nakagawa K."/>
            <person name="Okumura K."/>
            <person name="Nagase T."/>
            <person name="Nomura N."/>
            <person name="Kikuchi H."/>
            <person name="Masuho Y."/>
            <person name="Yamashita R."/>
            <person name="Nakai K."/>
            <person name="Yada T."/>
            <person name="Nakamura Y."/>
            <person name="Ohara O."/>
            <person name="Isogai T."/>
            <person name="Sugano S."/>
        </authorList>
    </citation>
    <scope>NUCLEOTIDE SEQUENCE [LARGE SCALE MRNA] (ISOFORM 1)</scope>
</reference>
<reference key="7">
    <citation type="journal article" date="2006" name="Nature">
        <title>The finished DNA sequence of human chromosome 12.</title>
        <authorList>
            <person name="Scherer S.E."/>
            <person name="Muzny D.M."/>
            <person name="Buhay C.J."/>
            <person name="Chen R."/>
            <person name="Cree A."/>
            <person name="Ding Y."/>
            <person name="Dugan-Rocha S."/>
            <person name="Gill R."/>
            <person name="Gunaratne P."/>
            <person name="Harris R.A."/>
            <person name="Hawes A.C."/>
            <person name="Hernandez J."/>
            <person name="Hodgson A.V."/>
            <person name="Hume J."/>
            <person name="Jackson A."/>
            <person name="Khan Z.M."/>
            <person name="Kovar-Smith C."/>
            <person name="Lewis L.R."/>
            <person name="Lozado R.J."/>
            <person name="Metzker M.L."/>
            <person name="Milosavljevic A."/>
            <person name="Miner G.R."/>
            <person name="Montgomery K.T."/>
            <person name="Morgan M.B."/>
            <person name="Nazareth L.V."/>
            <person name="Scott G."/>
            <person name="Sodergren E."/>
            <person name="Song X.-Z."/>
            <person name="Steffen D."/>
            <person name="Lovering R.C."/>
            <person name="Wheeler D.A."/>
            <person name="Worley K.C."/>
            <person name="Yuan Y."/>
            <person name="Zhang Z."/>
            <person name="Adams C.Q."/>
            <person name="Ansari-Lari M.A."/>
            <person name="Ayele M."/>
            <person name="Brown M.J."/>
            <person name="Chen G."/>
            <person name="Chen Z."/>
            <person name="Clerc-Blankenburg K.P."/>
            <person name="Davis C."/>
            <person name="Delgado O."/>
            <person name="Dinh H.H."/>
            <person name="Draper H."/>
            <person name="Gonzalez-Garay M.L."/>
            <person name="Havlak P."/>
            <person name="Jackson L.R."/>
            <person name="Jacob L.S."/>
            <person name="Kelly S.H."/>
            <person name="Li L."/>
            <person name="Li Z."/>
            <person name="Liu J."/>
            <person name="Liu W."/>
            <person name="Lu J."/>
            <person name="Maheshwari M."/>
            <person name="Nguyen B.-V."/>
            <person name="Okwuonu G.O."/>
            <person name="Pasternak S."/>
            <person name="Perez L.M."/>
            <person name="Plopper F.J.H."/>
            <person name="Santibanez J."/>
            <person name="Shen H."/>
            <person name="Tabor P.E."/>
            <person name="Verduzco D."/>
            <person name="Waldron L."/>
            <person name="Wang Q."/>
            <person name="Williams G.A."/>
            <person name="Zhang J."/>
            <person name="Zhou J."/>
            <person name="Allen C.C."/>
            <person name="Amin A.G."/>
            <person name="Anyalebechi V."/>
            <person name="Bailey M."/>
            <person name="Barbaria J.A."/>
            <person name="Bimage K.E."/>
            <person name="Bryant N.P."/>
            <person name="Burch P.E."/>
            <person name="Burkett C.E."/>
            <person name="Burrell K.L."/>
            <person name="Calderon E."/>
            <person name="Cardenas V."/>
            <person name="Carter K."/>
            <person name="Casias K."/>
            <person name="Cavazos I."/>
            <person name="Cavazos S.R."/>
            <person name="Ceasar H."/>
            <person name="Chacko J."/>
            <person name="Chan S.N."/>
            <person name="Chavez D."/>
            <person name="Christopoulos C."/>
            <person name="Chu J."/>
            <person name="Cockrell R."/>
            <person name="Cox C.D."/>
            <person name="Dang M."/>
            <person name="Dathorne S.R."/>
            <person name="David R."/>
            <person name="Davis C.M."/>
            <person name="Davy-Carroll L."/>
            <person name="Deshazo D.R."/>
            <person name="Donlin J.E."/>
            <person name="D'Souza L."/>
            <person name="Eaves K.A."/>
            <person name="Egan A."/>
            <person name="Emery-Cohen A.J."/>
            <person name="Escotto M."/>
            <person name="Flagg N."/>
            <person name="Forbes L.D."/>
            <person name="Gabisi A.M."/>
            <person name="Garza M."/>
            <person name="Hamilton C."/>
            <person name="Henderson N."/>
            <person name="Hernandez O."/>
            <person name="Hines S."/>
            <person name="Hogues M.E."/>
            <person name="Huang M."/>
            <person name="Idlebird D.G."/>
            <person name="Johnson R."/>
            <person name="Jolivet A."/>
            <person name="Jones S."/>
            <person name="Kagan R."/>
            <person name="King L.M."/>
            <person name="Leal B."/>
            <person name="Lebow H."/>
            <person name="Lee S."/>
            <person name="LeVan J.M."/>
            <person name="Lewis L.C."/>
            <person name="London P."/>
            <person name="Lorensuhewa L.M."/>
            <person name="Loulseged H."/>
            <person name="Lovett D.A."/>
            <person name="Lucier A."/>
            <person name="Lucier R.L."/>
            <person name="Ma J."/>
            <person name="Madu R.C."/>
            <person name="Mapua P."/>
            <person name="Martindale A.D."/>
            <person name="Martinez E."/>
            <person name="Massey E."/>
            <person name="Mawhiney S."/>
            <person name="Meador M.G."/>
            <person name="Mendez S."/>
            <person name="Mercado C."/>
            <person name="Mercado I.C."/>
            <person name="Merritt C.E."/>
            <person name="Miner Z.L."/>
            <person name="Minja E."/>
            <person name="Mitchell T."/>
            <person name="Mohabbat F."/>
            <person name="Mohabbat K."/>
            <person name="Montgomery B."/>
            <person name="Moore N."/>
            <person name="Morris S."/>
            <person name="Munidasa M."/>
            <person name="Ngo R.N."/>
            <person name="Nguyen N.B."/>
            <person name="Nickerson E."/>
            <person name="Nwaokelemeh O.O."/>
            <person name="Nwokenkwo S."/>
            <person name="Obregon M."/>
            <person name="Oguh M."/>
            <person name="Oragunye N."/>
            <person name="Oviedo R.J."/>
            <person name="Parish B.J."/>
            <person name="Parker D.N."/>
            <person name="Parrish J."/>
            <person name="Parks K.L."/>
            <person name="Paul H.A."/>
            <person name="Payton B.A."/>
            <person name="Perez A."/>
            <person name="Perrin W."/>
            <person name="Pickens A."/>
            <person name="Primus E.L."/>
            <person name="Pu L.-L."/>
            <person name="Puazo M."/>
            <person name="Quiles M.M."/>
            <person name="Quiroz J.B."/>
            <person name="Rabata D."/>
            <person name="Reeves K."/>
            <person name="Ruiz S.J."/>
            <person name="Shao H."/>
            <person name="Sisson I."/>
            <person name="Sonaike T."/>
            <person name="Sorelle R.P."/>
            <person name="Sutton A.E."/>
            <person name="Svatek A.F."/>
            <person name="Svetz L.A."/>
            <person name="Tamerisa K.S."/>
            <person name="Taylor T.R."/>
            <person name="Teague B."/>
            <person name="Thomas N."/>
            <person name="Thorn R.D."/>
            <person name="Trejos Z.Y."/>
            <person name="Trevino B.K."/>
            <person name="Ukegbu O.N."/>
            <person name="Urban J.B."/>
            <person name="Vasquez L.I."/>
            <person name="Vera V.A."/>
            <person name="Villasana D.M."/>
            <person name="Wang L."/>
            <person name="Ward-Moore S."/>
            <person name="Warren J.T."/>
            <person name="Wei X."/>
            <person name="White F."/>
            <person name="Williamson A.L."/>
            <person name="Wleczyk R."/>
            <person name="Wooden H.S."/>
            <person name="Wooden S.H."/>
            <person name="Yen J."/>
            <person name="Yoon L."/>
            <person name="Yoon V."/>
            <person name="Zorrilla S.E."/>
            <person name="Nelson D."/>
            <person name="Kucherlapati R."/>
            <person name="Weinstock G."/>
            <person name="Gibbs R.A."/>
        </authorList>
    </citation>
    <scope>NUCLEOTIDE SEQUENCE [LARGE SCALE GENOMIC DNA]</scope>
</reference>
<reference key="8">
    <citation type="submission" date="2005-07" db="EMBL/GenBank/DDBJ databases">
        <authorList>
            <person name="Mural R.J."/>
            <person name="Istrail S."/>
            <person name="Sutton G.G."/>
            <person name="Florea L."/>
            <person name="Halpern A.L."/>
            <person name="Mobarry C.M."/>
            <person name="Lippert R."/>
            <person name="Walenz B."/>
            <person name="Shatkay H."/>
            <person name="Dew I."/>
            <person name="Miller J.R."/>
            <person name="Flanigan M.J."/>
            <person name="Edwards N.J."/>
            <person name="Bolanos R."/>
            <person name="Fasulo D."/>
            <person name="Halldorsson B.V."/>
            <person name="Hannenhalli S."/>
            <person name="Turner R."/>
            <person name="Yooseph S."/>
            <person name="Lu F."/>
            <person name="Nusskern D.R."/>
            <person name="Shue B.C."/>
            <person name="Zheng X.H."/>
            <person name="Zhong F."/>
            <person name="Delcher A.L."/>
            <person name="Huson D.H."/>
            <person name="Kravitz S.A."/>
            <person name="Mouchard L."/>
            <person name="Reinert K."/>
            <person name="Remington K.A."/>
            <person name="Clark A.G."/>
            <person name="Waterman M.S."/>
            <person name="Eichler E.E."/>
            <person name="Adams M.D."/>
            <person name="Hunkapiller M.W."/>
            <person name="Myers E.W."/>
            <person name="Venter J.C."/>
        </authorList>
    </citation>
    <scope>NUCLEOTIDE SEQUENCE [LARGE SCALE GENOMIC DNA]</scope>
</reference>
<reference key="9">
    <citation type="journal article" date="2004" name="Genome Res.">
        <title>The status, quality, and expansion of the NIH full-length cDNA project: the Mammalian Gene Collection (MGC).</title>
        <authorList>
            <consortium name="The MGC Project Team"/>
        </authorList>
    </citation>
    <scope>NUCLEOTIDE SEQUENCE [LARGE SCALE MRNA] (ISOFORMS 1 AND 2)</scope>
    <source>
        <tissue>Brain</tissue>
        <tissue>Prostate</tissue>
    </source>
</reference>
<reference key="10">
    <citation type="journal article" date="2011" name="BMC Syst. Biol.">
        <title>Initial characterization of the human central proteome.</title>
        <authorList>
            <person name="Burkard T.R."/>
            <person name="Planyavsky M."/>
            <person name="Kaupe I."/>
            <person name="Breitwieser F.P."/>
            <person name="Buerckstuemmer T."/>
            <person name="Bennett K.L."/>
            <person name="Superti-Furga G."/>
            <person name="Colinge J."/>
        </authorList>
    </citation>
    <scope>IDENTIFICATION BY MASS SPECTROMETRY [LARGE SCALE ANALYSIS]</scope>
</reference>
<reference key="11">
    <citation type="journal article" date="2014" name="J. Proteomics">
        <title>An enzyme assisted RP-RPLC approach for in-depth analysis of human liver phosphoproteome.</title>
        <authorList>
            <person name="Bian Y."/>
            <person name="Song C."/>
            <person name="Cheng K."/>
            <person name="Dong M."/>
            <person name="Wang F."/>
            <person name="Huang J."/>
            <person name="Sun D."/>
            <person name="Wang L."/>
            <person name="Ye M."/>
            <person name="Zou H."/>
        </authorList>
    </citation>
    <scope>IDENTIFICATION BY MASS SPECTROMETRY [LARGE SCALE ANALYSIS]</scope>
    <source>
        <tissue>Liver</tissue>
    </source>
</reference>
<reference key="12">
    <citation type="journal article" date="2015" name="Proteomics">
        <title>N-terminome analysis of the human mitochondrial proteome.</title>
        <authorList>
            <person name="Vaca Jacome A.S."/>
            <person name="Rabilloud T."/>
            <person name="Schaeffer-Reiss C."/>
            <person name="Rompais M."/>
            <person name="Ayoub D."/>
            <person name="Lane L."/>
            <person name="Bairoch A."/>
            <person name="Van Dorsselaer A."/>
            <person name="Carapito C."/>
        </authorList>
    </citation>
    <scope>IDENTIFICATION BY MASS SPECTROMETRY [LARGE SCALE ANALYSIS]</scope>
</reference>
<organism>
    <name type="scientific">Homo sapiens</name>
    <name type="common">Human</name>
    <dbReference type="NCBI Taxonomy" id="9606"/>
    <lineage>
        <taxon>Eukaryota</taxon>
        <taxon>Metazoa</taxon>
        <taxon>Chordata</taxon>
        <taxon>Craniata</taxon>
        <taxon>Vertebrata</taxon>
        <taxon>Euteleostomi</taxon>
        <taxon>Mammalia</taxon>
        <taxon>Eutheria</taxon>
        <taxon>Euarchontoglires</taxon>
        <taxon>Primates</taxon>
        <taxon>Haplorrhini</taxon>
        <taxon>Catarrhini</taxon>
        <taxon>Hominidae</taxon>
        <taxon>Homo</taxon>
    </lineage>
</organism>
<proteinExistence type="evidence at protein level"/>
<comment type="function">
    <text evidence="1">Conjugation of reduced glutathione to a wide number of exogenous and endogenous hydrophobic electrophiles.</text>
</comment>
<comment type="catalytic activity">
    <reaction evidence="1">
        <text>RX + glutathione = an S-substituted glutathione + a halide anion + H(+)</text>
        <dbReference type="Rhea" id="RHEA:16437"/>
        <dbReference type="ChEBI" id="CHEBI:15378"/>
        <dbReference type="ChEBI" id="CHEBI:16042"/>
        <dbReference type="ChEBI" id="CHEBI:17792"/>
        <dbReference type="ChEBI" id="CHEBI:57925"/>
        <dbReference type="ChEBI" id="CHEBI:90779"/>
        <dbReference type="EC" id="2.5.1.18"/>
    </reaction>
    <physiologicalReaction direction="left-to-right" evidence="1">
        <dbReference type="Rhea" id="RHEA:16438"/>
    </physiologicalReaction>
</comment>
<comment type="subunit">
    <text evidence="1">Homotrimer; The trimer binds only one molecule of glutathione.</text>
</comment>
<comment type="interaction">
    <interactant intactId="EBI-2691601">
        <id>P10620</id>
    </interactant>
    <interactant intactId="EBI-640857">
        <id>P01133</id>
        <label>EGF</label>
    </interactant>
    <organismsDiffer>false</organismsDiffer>
    <experiments>3</experiments>
</comment>
<comment type="interaction">
    <interactant intactId="EBI-2691601">
        <id>P10620</id>
    </interactant>
    <interactant intactId="EBI-12175685">
        <id>Q14802-3</id>
        <label>FXYD3</label>
    </interactant>
    <organismsDiffer>false</organismsDiffer>
    <experiments>3</experiments>
</comment>
<comment type="interaction">
    <interactant intactId="EBI-2691601">
        <id>P10620</id>
    </interactant>
    <interactant intactId="EBI-746917">
        <id>O75084</id>
        <label>FZD7</label>
    </interactant>
    <organismsDiffer>false</organismsDiffer>
    <experiments>3</experiments>
</comment>
<comment type="interaction">
    <interactant intactId="EBI-2691601">
        <id>P10620</id>
    </interactant>
    <interactant intactId="EBI-347721">
        <id>Q8WX92</id>
        <label>NELFB</label>
    </interactant>
    <organismsDiffer>false</organismsDiffer>
    <experiments>2</experiments>
</comment>
<comment type="interaction">
    <interactant intactId="EBI-2691601">
        <id>P10620</id>
    </interactant>
    <interactant intactId="EBI-17640454">
        <id>Q96PQ1</id>
        <label>SIGLEC12</label>
    </interactant>
    <organismsDiffer>false</organismsDiffer>
    <experiments>3</experiments>
</comment>
<comment type="interaction">
    <interactant intactId="EBI-2691601">
        <id>P10620</id>
    </interactant>
    <interactant intactId="EBI-717441">
        <id>O14798</id>
        <label>TNFRSF10C</label>
    </interactant>
    <organismsDiffer>false</organismsDiffer>
    <experiments>3</experiments>
</comment>
<comment type="interaction">
    <interactant intactId="EBI-2691601">
        <id>P10620</id>
    </interactant>
    <interactant intactId="EBI-12320391">
        <id>P01282-2</id>
        <label>VIP</label>
    </interactant>
    <organismsDiffer>false</organismsDiffer>
    <experiments>3</experiments>
</comment>
<comment type="subcellular location">
    <subcellularLocation>
        <location evidence="1">Endoplasmic reticulum membrane</location>
        <topology evidence="3">Multi-pass membrane protein</topology>
    </subcellularLocation>
    <subcellularLocation>
        <location evidence="1">Mitochondrion outer membrane</location>
    </subcellularLocation>
</comment>
<comment type="alternative products">
    <event type="alternative splicing"/>
    <isoform>
        <id>P10620-1</id>
        <name>1</name>
        <sequence type="displayed"/>
    </isoform>
    <isoform>
        <id>P10620-2</id>
        <name>2</name>
        <sequence type="described" ref="VSP_046160"/>
    </isoform>
</comment>
<comment type="tissue specificity">
    <text evidence="4">Highly expressed in liver.</text>
</comment>
<comment type="similarity">
    <text evidence="6">Belongs to the MAPEG family.</text>
</comment>
<sequence>MVDLTQVMDDEVFMAFASYATIILSKMMLMSTATAFYRLTRKVFANPEDCVAFGKGENAKKYLRTDDRVERVRRAHLNDLENIIPFLGIGLLYSLSGPDPSTAILHFRLFVGARIYHTIAYLTPLPQPNRALSFFVGYGVTLSMAYRLLKSKLYL</sequence>
<gene>
    <name type="primary">MGST1</name>
    <name type="synonym">GST12</name>
    <name type="synonym">MGST</name>
</gene>
<protein>
    <recommendedName>
        <fullName>Microsomal glutathione S-transferase 1</fullName>
        <shortName>Microsomal GST-1</shortName>
        <ecNumber evidence="1">2.5.1.18</ecNumber>
    </recommendedName>
    <alternativeName>
        <fullName>Microsomal GST-I</fullName>
    </alternativeName>
</protein>
<keyword id="KW-0007">Acetylation</keyword>
<keyword id="KW-0025">Alternative splicing</keyword>
<keyword id="KW-0256">Endoplasmic reticulum</keyword>
<keyword id="KW-0472">Membrane</keyword>
<keyword id="KW-0496">Mitochondrion</keyword>
<keyword id="KW-1000">Mitochondrion outer membrane</keyword>
<keyword id="KW-1267">Proteomics identification</keyword>
<keyword id="KW-1185">Reference proteome</keyword>
<keyword id="KW-0808">Transferase</keyword>
<keyword id="KW-0812">Transmembrane</keyword>
<keyword id="KW-1133">Transmembrane helix</keyword>
<name>MGST1_HUMAN</name>
<accession>P10620</accession>
<accession>A8K533</accession>
<accession>G5EA53</accession>
<dbReference type="EC" id="2.5.1.18" evidence="1"/>
<dbReference type="EMBL" id="J03746">
    <property type="protein sequence ID" value="AAA35934.1"/>
    <property type="molecule type" value="mRNA"/>
</dbReference>
<dbReference type="EMBL" id="U46498">
    <property type="protein sequence ID" value="AAC50711.1"/>
    <property type="molecule type" value="Genomic_DNA"/>
</dbReference>
<dbReference type="EMBL" id="AF092926">
    <property type="protein sequence ID" value="AAC50711.1"/>
    <property type="status" value="JOINED"/>
    <property type="molecule type" value="Genomic_DNA"/>
</dbReference>
<dbReference type="EMBL" id="U46497">
    <property type="protein sequence ID" value="AAC50711.1"/>
    <property type="status" value="JOINED"/>
    <property type="molecule type" value="Genomic_DNA"/>
</dbReference>
<dbReference type="EMBL" id="U71213">
    <property type="protein sequence ID" value="AAB17184.1"/>
    <property type="molecule type" value="Genomic_DNA"/>
</dbReference>
<dbReference type="EMBL" id="U71211">
    <property type="protein sequence ID" value="AAB17184.1"/>
    <property type="status" value="JOINED"/>
    <property type="molecule type" value="Genomic_DNA"/>
</dbReference>
<dbReference type="EMBL" id="U71212">
    <property type="protein sequence ID" value="AAB17184.1"/>
    <property type="status" value="JOINED"/>
    <property type="molecule type" value="Genomic_DNA"/>
</dbReference>
<dbReference type="EMBL" id="BT006982">
    <property type="protein sequence ID" value="AAP35628.1"/>
    <property type="molecule type" value="mRNA"/>
</dbReference>
<dbReference type="EMBL" id="AY368173">
    <property type="protein sequence ID" value="AAQ55111.1"/>
    <property type="molecule type" value="Genomic_DNA"/>
</dbReference>
<dbReference type="EMBL" id="AK291148">
    <property type="protein sequence ID" value="BAF83837.1"/>
    <property type="molecule type" value="mRNA"/>
</dbReference>
<dbReference type="EMBL" id="AC007528">
    <property type="status" value="NOT_ANNOTATED_CDS"/>
    <property type="molecule type" value="Genomic_DNA"/>
</dbReference>
<dbReference type="EMBL" id="AC007529">
    <property type="status" value="NOT_ANNOTATED_CDS"/>
    <property type="molecule type" value="Genomic_DNA"/>
</dbReference>
<dbReference type="EMBL" id="AC007552">
    <property type="status" value="NOT_ANNOTATED_CDS"/>
    <property type="molecule type" value="Genomic_DNA"/>
</dbReference>
<dbReference type="EMBL" id="CH471094">
    <property type="protein sequence ID" value="EAW96362.1"/>
    <property type="molecule type" value="Genomic_DNA"/>
</dbReference>
<dbReference type="EMBL" id="CH471094">
    <property type="protein sequence ID" value="EAW96367.1"/>
    <property type="molecule type" value="Genomic_DNA"/>
</dbReference>
<dbReference type="EMBL" id="BC005923">
    <property type="protein sequence ID" value="AAH05923.1"/>
    <property type="molecule type" value="mRNA"/>
</dbReference>
<dbReference type="EMBL" id="BC056863">
    <property type="status" value="NOT_ANNOTATED_CDS"/>
    <property type="molecule type" value="mRNA"/>
</dbReference>
<dbReference type="CCDS" id="CCDS58209.1">
    <molecule id="P10620-2"/>
</dbReference>
<dbReference type="CCDS" id="CCDS8677.1">
    <molecule id="P10620-1"/>
</dbReference>
<dbReference type="PIR" id="B28083">
    <property type="entry name" value="B28083"/>
</dbReference>
<dbReference type="RefSeq" id="NP_001247440.1">
    <molecule id="P10620-1"/>
    <property type="nucleotide sequence ID" value="NM_001260511.2"/>
</dbReference>
<dbReference type="RefSeq" id="NP_001247441.1">
    <property type="nucleotide sequence ID" value="NM_001260512.1"/>
</dbReference>
<dbReference type="RefSeq" id="NP_001254527.1">
    <molecule id="P10620-2"/>
    <property type="nucleotide sequence ID" value="NM_001267598.2"/>
</dbReference>
<dbReference type="RefSeq" id="NP_001401286.1">
    <molecule id="P10620-1"/>
    <property type="nucleotide sequence ID" value="NM_001414357.1"/>
</dbReference>
<dbReference type="RefSeq" id="NP_001401287.1">
    <molecule id="P10620-1"/>
    <property type="nucleotide sequence ID" value="NM_001414358.1"/>
</dbReference>
<dbReference type="RefSeq" id="NP_001401288.1">
    <molecule id="P10620-1"/>
    <property type="nucleotide sequence ID" value="NM_001414359.1"/>
</dbReference>
<dbReference type="RefSeq" id="NP_064696.1">
    <molecule id="P10620-1"/>
    <property type="nucleotide sequence ID" value="NM_020300.5"/>
</dbReference>
<dbReference type="RefSeq" id="NP_665707.1">
    <molecule id="P10620-1"/>
    <property type="nucleotide sequence ID" value="NM_145764.3"/>
</dbReference>
<dbReference type="RefSeq" id="NP_665734.1">
    <molecule id="P10620-1"/>
    <property type="nucleotide sequence ID" value="NM_145791.3"/>
</dbReference>
<dbReference type="RefSeq" id="NP_665735.1">
    <molecule id="P10620-1"/>
    <property type="nucleotide sequence ID" value="NM_145792.3"/>
</dbReference>
<dbReference type="SMR" id="P10620"/>
<dbReference type="BioGRID" id="110413">
    <property type="interactions" value="140"/>
</dbReference>
<dbReference type="FunCoup" id="P10620">
    <property type="interactions" value="650"/>
</dbReference>
<dbReference type="IntAct" id="P10620">
    <property type="interactions" value="50"/>
</dbReference>
<dbReference type="MINT" id="P10620"/>
<dbReference type="STRING" id="9606.ENSP00000379512"/>
<dbReference type="BindingDB" id="P10620"/>
<dbReference type="ChEMBL" id="CHEMBL1743184"/>
<dbReference type="DrugBank" id="DB00143">
    <property type="generic name" value="Glutathione"/>
</dbReference>
<dbReference type="DrugBank" id="DB03310">
    <property type="generic name" value="Glutathione disulfide"/>
</dbReference>
<dbReference type="DrugBank" id="DB14924">
    <property type="generic name" value="Ritlecitinib"/>
</dbReference>
<dbReference type="GlyGen" id="P10620">
    <property type="glycosylation" value="1 site, 1 O-linked glycan (1 site)"/>
</dbReference>
<dbReference type="iPTMnet" id="P10620"/>
<dbReference type="MetOSite" id="P10620"/>
<dbReference type="PhosphoSitePlus" id="P10620"/>
<dbReference type="SwissPalm" id="P10620"/>
<dbReference type="BioMuta" id="MGST1"/>
<dbReference type="DMDM" id="121740"/>
<dbReference type="jPOST" id="P10620"/>
<dbReference type="MassIVE" id="P10620"/>
<dbReference type="PaxDb" id="9606-ENSP00000379512"/>
<dbReference type="PeptideAtlas" id="P10620"/>
<dbReference type="ProteomicsDB" id="34143"/>
<dbReference type="ProteomicsDB" id="52620">
    <molecule id="P10620-1"/>
</dbReference>
<dbReference type="Pumba" id="P10620"/>
<dbReference type="TopDownProteomics" id="P10620-1">
    <molecule id="P10620-1"/>
</dbReference>
<dbReference type="Antibodypedia" id="23831">
    <property type="antibodies" value="226 antibodies from 32 providers"/>
</dbReference>
<dbReference type="DNASU" id="4257"/>
<dbReference type="Ensembl" id="ENST00000010404.6">
    <molecule id="P10620-1"/>
    <property type="protein sequence ID" value="ENSP00000010404.2"/>
    <property type="gene ID" value="ENSG00000008394.13"/>
</dbReference>
<dbReference type="Ensembl" id="ENST00000396207.1">
    <molecule id="P10620-1"/>
    <property type="protein sequence ID" value="ENSP00000379510.1"/>
    <property type="gene ID" value="ENSG00000008394.13"/>
</dbReference>
<dbReference type="Ensembl" id="ENST00000396209.5">
    <molecule id="P10620-1"/>
    <property type="protein sequence ID" value="ENSP00000379512.1"/>
    <property type="gene ID" value="ENSG00000008394.13"/>
</dbReference>
<dbReference type="Ensembl" id="ENST00000396210.8">
    <molecule id="P10620-1"/>
    <property type="protein sequence ID" value="ENSP00000379513.3"/>
    <property type="gene ID" value="ENSG00000008394.13"/>
</dbReference>
<dbReference type="Ensembl" id="ENST00000535309.5">
    <molecule id="P10620-2"/>
    <property type="protein sequence ID" value="ENSP00000438308.1"/>
    <property type="gene ID" value="ENSG00000008394.13"/>
</dbReference>
<dbReference type="GeneID" id="4257"/>
<dbReference type="KEGG" id="hsa:4257"/>
<dbReference type="MANE-Select" id="ENST00000396210.8">
    <property type="protein sequence ID" value="ENSP00000379513.3"/>
    <property type="RefSeq nucleotide sequence ID" value="NM_020300.5"/>
    <property type="RefSeq protein sequence ID" value="NP_064696.1"/>
</dbReference>
<dbReference type="UCSC" id="uc001rdf.4">
    <molecule id="P10620-1"/>
    <property type="organism name" value="human"/>
</dbReference>
<dbReference type="AGR" id="HGNC:7061"/>
<dbReference type="CTD" id="4257"/>
<dbReference type="DisGeNET" id="4257"/>
<dbReference type="GeneCards" id="MGST1"/>
<dbReference type="HGNC" id="HGNC:7061">
    <property type="gene designation" value="MGST1"/>
</dbReference>
<dbReference type="HPA" id="ENSG00000008394">
    <property type="expression patterns" value="Tissue enhanced (adipose tissue, adrenal gland, liver)"/>
</dbReference>
<dbReference type="MIM" id="138330">
    <property type="type" value="gene"/>
</dbReference>
<dbReference type="neXtProt" id="NX_P10620"/>
<dbReference type="OpenTargets" id="ENSG00000008394"/>
<dbReference type="PharmGKB" id="PA30791"/>
<dbReference type="VEuPathDB" id="HostDB:ENSG00000008394"/>
<dbReference type="eggNOG" id="ENOG502S0BD">
    <property type="taxonomic scope" value="Eukaryota"/>
</dbReference>
<dbReference type="GeneTree" id="ENSGT00390000011980"/>
<dbReference type="HOGENOM" id="CLU_105467_1_0_1"/>
<dbReference type="InParanoid" id="P10620"/>
<dbReference type="OMA" id="RAQRCHH"/>
<dbReference type="OrthoDB" id="193139at2759"/>
<dbReference type="PAN-GO" id="P10620">
    <property type="GO annotations" value="2 GO annotations based on evolutionary models"/>
</dbReference>
<dbReference type="PhylomeDB" id="P10620"/>
<dbReference type="TreeFam" id="TF105327"/>
<dbReference type="PathwayCommons" id="P10620"/>
<dbReference type="Reactome" id="R-HSA-156590">
    <property type="pathway name" value="Glutathione conjugation"/>
</dbReference>
<dbReference type="Reactome" id="R-HSA-5423646">
    <property type="pathway name" value="Aflatoxin activation and detoxification"/>
</dbReference>
<dbReference type="Reactome" id="R-HSA-6798695">
    <property type="pathway name" value="Neutrophil degranulation"/>
</dbReference>
<dbReference type="SignaLink" id="P10620"/>
<dbReference type="BioGRID-ORCS" id="4257">
    <property type="hits" value="12 hits in 1169 CRISPR screens"/>
</dbReference>
<dbReference type="ChiTaRS" id="MGST1">
    <property type="organism name" value="human"/>
</dbReference>
<dbReference type="GeneWiki" id="Microsomal_glutathione_S-transferase_1"/>
<dbReference type="GenomeRNAi" id="4257"/>
<dbReference type="Pharos" id="P10620">
    <property type="development level" value="Tbio"/>
</dbReference>
<dbReference type="PRO" id="PR:P10620"/>
<dbReference type="Proteomes" id="UP000005640">
    <property type="component" value="Chromosome 12"/>
</dbReference>
<dbReference type="RNAct" id="P10620">
    <property type="molecule type" value="protein"/>
</dbReference>
<dbReference type="Bgee" id="ENSG00000008394">
    <property type="expression patterns" value="Expressed in right adrenal gland and 187 other cell types or tissues"/>
</dbReference>
<dbReference type="ExpressionAtlas" id="P10620">
    <property type="expression patterns" value="baseline and differential"/>
</dbReference>
<dbReference type="GO" id="GO:0035577">
    <property type="term" value="C:azurophil granule membrane"/>
    <property type="evidence" value="ECO:0000304"/>
    <property type="project" value="Reactome"/>
</dbReference>
<dbReference type="GO" id="GO:0005783">
    <property type="term" value="C:endoplasmic reticulum"/>
    <property type="evidence" value="ECO:0000250"/>
    <property type="project" value="UniProtKB"/>
</dbReference>
<dbReference type="GO" id="GO:0005789">
    <property type="term" value="C:endoplasmic reticulum membrane"/>
    <property type="evidence" value="ECO:0000304"/>
    <property type="project" value="Reactome"/>
</dbReference>
<dbReference type="GO" id="GO:0016020">
    <property type="term" value="C:membrane"/>
    <property type="evidence" value="ECO:0000250"/>
    <property type="project" value="UniProtKB"/>
</dbReference>
<dbReference type="GO" id="GO:0005741">
    <property type="term" value="C:mitochondrial outer membrane"/>
    <property type="evidence" value="ECO:0007669"/>
    <property type="project" value="UniProtKB-SubCell"/>
</dbReference>
<dbReference type="GO" id="GO:0005739">
    <property type="term" value="C:mitochondrion"/>
    <property type="evidence" value="ECO:0000314"/>
    <property type="project" value="UniProtKB"/>
</dbReference>
<dbReference type="GO" id="GO:0005778">
    <property type="term" value="C:peroxisomal membrane"/>
    <property type="evidence" value="ECO:0000250"/>
    <property type="project" value="UniProtKB"/>
</dbReference>
<dbReference type="GO" id="GO:0005886">
    <property type="term" value="C:plasma membrane"/>
    <property type="evidence" value="ECO:0000304"/>
    <property type="project" value="Reactome"/>
</dbReference>
<dbReference type="GO" id="GO:0004602">
    <property type="term" value="F:glutathione peroxidase activity"/>
    <property type="evidence" value="ECO:0000314"/>
    <property type="project" value="UniProtKB"/>
</dbReference>
<dbReference type="GO" id="GO:0004364">
    <property type="term" value="F:glutathione transferase activity"/>
    <property type="evidence" value="ECO:0000314"/>
    <property type="project" value="UniProtKB"/>
</dbReference>
<dbReference type="GO" id="GO:0071449">
    <property type="term" value="P:cellular response to lipid hydroperoxide"/>
    <property type="evidence" value="ECO:0000314"/>
    <property type="project" value="UniProtKB"/>
</dbReference>
<dbReference type="GO" id="GO:0034635">
    <property type="term" value="P:glutathione transport"/>
    <property type="evidence" value="ECO:0000314"/>
    <property type="project" value="UniProtKB"/>
</dbReference>
<dbReference type="FunFam" id="1.20.120.550:FF:000002">
    <property type="entry name" value="Microsomal glutathione S-transferase 1"/>
    <property type="match status" value="1"/>
</dbReference>
<dbReference type="Gene3D" id="1.20.120.550">
    <property type="entry name" value="Membrane associated eicosanoid/glutathione metabolism-like domain"/>
    <property type="match status" value="1"/>
</dbReference>
<dbReference type="InterPro" id="IPR023352">
    <property type="entry name" value="MAPEG-like_dom_sf"/>
</dbReference>
<dbReference type="InterPro" id="IPR001129">
    <property type="entry name" value="Membr-assoc_MAPEG"/>
</dbReference>
<dbReference type="InterPro" id="IPR040162">
    <property type="entry name" value="MGST1-like"/>
</dbReference>
<dbReference type="PANTHER" id="PTHR10689">
    <property type="entry name" value="MICROSOMAL GLUTATHIONE S-TRANSFERASE 1"/>
    <property type="match status" value="1"/>
</dbReference>
<dbReference type="PANTHER" id="PTHR10689:SF6">
    <property type="entry name" value="MICROSOMAL GLUTATHIONE S-TRANSFERASE 1"/>
    <property type="match status" value="1"/>
</dbReference>
<dbReference type="Pfam" id="PF01124">
    <property type="entry name" value="MAPEG"/>
    <property type="match status" value="1"/>
</dbReference>
<dbReference type="SUPFAM" id="SSF161084">
    <property type="entry name" value="MAPEG domain-like"/>
    <property type="match status" value="1"/>
</dbReference>
<evidence type="ECO:0000250" key="1">
    <source>
        <dbReference type="UniProtKB" id="P08011"/>
    </source>
</evidence>
<evidence type="ECO:0000250" key="2">
    <source>
        <dbReference type="UniProtKB" id="Q91VS7"/>
    </source>
</evidence>
<evidence type="ECO:0000255" key="3"/>
<evidence type="ECO:0000269" key="4">
    <source>
    </source>
</evidence>
<evidence type="ECO:0000303" key="5">
    <source>
    </source>
</evidence>
<evidence type="ECO:0000305" key="6"/>